<sequence>MVIIRAKQLVTALNMPWRYRDEVAVINDAAVVIRDGVIIDVGTWEEIKRRHPHANIWDFGDNLITPGLVDPHTHLLFAGSREDELERKLQGESYEEITRKGGGIYKTVKYTKETSDQELLNILQKRIQLATSFGTTTVEVKTGYGLDIDQELRLARILKSVKSPIDVVTTFLVHIPPPAGRENYVKEVLKAIPHAGTTYVDVFCDSIAFNVEETRTILKKAAEAGYKLRLHADELEYIGCSDLVEELPIDSADHLLNTPPENVRKIAKSGTVATLLPVTILTLRTSKKPPIDEMRRLRVPIAIGTDFSPNSWCLNMQTAIELAVYLLGLTPLEALIAATANAAYSLRLTDRGIIQPGKIADLVIWDVPNYHWLAYEIGRNKAKLVLKKGEPLRFL</sequence>
<protein>
    <recommendedName>
        <fullName evidence="1">Imidazolonepropionase</fullName>
        <ecNumber evidence="1">3.5.2.7</ecNumber>
    </recommendedName>
    <alternativeName>
        <fullName evidence="1">Imidazolone-5-propionate hydrolase</fullName>
    </alternativeName>
</protein>
<evidence type="ECO:0000255" key="1">
    <source>
        <dbReference type="HAMAP-Rule" id="MF_00372"/>
    </source>
</evidence>
<keyword id="KW-0963">Cytoplasm</keyword>
<keyword id="KW-0369">Histidine metabolism</keyword>
<keyword id="KW-0378">Hydrolase</keyword>
<keyword id="KW-0408">Iron</keyword>
<keyword id="KW-0479">Metal-binding</keyword>
<keyword id="KW-0862">Zinc</keyword>
<comment type="function">
    <text evidence="1">Catalyzes the hydrolytic cleavage of the carbon-nitrogen bond in imidazolone-5-propanoate to yield N-formimidoyl-L-glutamate. It is the third step in the universal histidine degradation pathway.</text>
</comment>
<comment type="catalytic activity">
    <reaction evidence="1">
        <text>4-imidazolone-5-propanoate + H2O = N-formimidoyl-L-glutamate</text>
        <dbReference type="Rhea" id="RHEA:23660"/>
        <dbReference type="ChEBI" id="CHEBI:15377"/>
        <dbReference type="ChEBI" id="CHEBI:58928"/>
        <dbReference type="ChEBI" id="CHEBI:77893"/>
        <dbReference type="EC" id="3.5.2.7"/>
    </reaction>
</comment>
<comment type="cofactor">
    <cofactor evidence="1">
        <name>Zn(2+)</name>
        <dbReference type="ChEBI" id="CHEBI:29105"/>
    </cofactor>
    <cofactor evidence="1">
        <name>Fe(3+)</name>
        <dbReference type="ChEBI" id="CHEBI:29034"/>
    </cofactor>
    <text evidence="1">Binds 1 zinc or iron ion per subunit.</text>
</comment>
<comment type="pathway">
    <text evidence="1">Amino-acid degradation; L-histidine degradation into L-glutamate; N-formimidoyl-L-glutamate from L-histidine: step 3/3.</text>
</comment>
<comment type="subcellular location">
    <subcellularLocation>
        <location evidence="1">Cytoplasm</location>
    </subcellularLocation>
</comment>
<comment type="similarity">
    <text evidence="1">Belongs to the metallo-dependent hydrolases superfamily. HutI family.</text>
</comment>
<dbReference type="EC" id="3.5.2.7" evidence="1"/>
<dbReference type="EMBL" id="CP000660">
    <property type="protein sequence ID" value="ABP51040.1"/>
    <property type="molecule type" value="Genomic_DNA"/>
</dbReference>
<dbReference type="SMR" id="A4WKX3"/>
<dbReference type="STRING" id="340102.Pars_1483"/>
<dbReference type="KEGG" id="pas:Pars_1483"/>
<dbReference type="HOGENOM" id="CLU_041647_0_0_2"/>
<dbReference type="OrthoDB" id="24954at2157"/>
<dbReference type="PhylomeDB" id="A4WKX3"/>
<dbReference type="UniPathway" id="UPA00379">
    <property type="reaction ID" value="UER00551"/>
</dbReference>
<dbReference type="Proteomes" id="UP000001567">
    <property type="component" value="Chromosome"/>
</dbReference>
<dbReference type="GO" id="GO:0005737">
    <property type="term" value="C:cytoplasm"/>
    <property type="evidence" value="ECO:0007669"/>
    <property type="project" value="UniProtKB-SubCell"/>
</dbReference>
<dbReference type="GO" id="GO:0050480">
    <property type="term" value="F:imidazolonepropionase activity"/>
    <property type="evidence" value="ECO:0007669"/>
    <property type="project" value="UniProtKB-UniRule"/>
</dbReference>
<dbReference type="GO" id="GO:0005506">
    <property type="term" value="F:iron ion binding"/>
    <property type="evidence" value="ECO:0007669"/>
    <property type="project" value="UniProtKB-UniRule"/>
</dbReference>
<dbReference type="GO" id="GO:0008270">
    <property type="term" value="F:zinc ion binding"/>
    <property type="evidence" value="ECO:0007669"/>
    <property type="project" value="UniProtKB-UniRule"/>
</dbReference>
<dbReference type="GO" id="GO:0019556">
    <property type="term" value="P:L-histidine catabolic process to glutamate and formamide"/>
    <property type="evidence" value="ECO:0007669"/>
    <property type="project" value="UniProtKB-UniPathway"/>
</dbReference>
<dbReference type="GO" id="GO:0019557">
    <property type="term" value="P:L-histidine catabolic process to glutamate and formate"/>
    <property type="evidence" value="ECO:0007669"/>
    <property type="project" value="UniProtKB-UniPathway"/>
</dbReference>
<dbReference type="Gene3D" id="3.20.20.140">
    <property type="entry name" value="Metal-dependent hydrolases"/>
    <property type="match status" value="1"/>
</dbReference>
<dbReference type="Gene3D" id="2.30.40.10">
    <property type="entry name" value="Urease, subunit C, domain 1"/>
    <property type="match status" value="1"/>
</dbReference>
<dbReference type="HAMAP" id="MF_00372">
    <property type="entry name" value="HutI"/>
    <property type="match status" value="1"/>
</dbReference>
<dbReference type="InterPro" id="IPR013108">
    <property type="entry name" value="Amidohydro_3"/>
</dbReference>
<dbReference type="InterPro" id="IPR005920">
    <property type="entry name" value="HutI"/>
</dbReference>
<dbReference type="InterPro" id="IPR011059">
    <property type="entry name" value="Metal-dep_hydrolase_composite"/>
</dbReference>
<dbReference type="InterPro" id="IPR032466">
    <property type="entry name" value="Metal_Hydrolase"/>
</dbReference>
<dbReference type="InterPro" id="IPR054418">
    <property type="entry name" value="MQNX/HUTI_composite_N"/>
</dbReference>
<dbReference type="NCBIfam" id="TIGR01224">
    <property type="entry name" value="hutI"/>
    <property type="match status" value="1"/>
</dbReference>
<dbReference type="PANTHER" id="PTHR42752">
    <property type="entry name" value="IMIDAZOLONEPROPIONASE"/>
    <property type="match status" value="1"/>
</dbReference>
<dbReference type="PANTHER" id="PTHR42752:SF1">
    <property type="entry name" value="IMIDAZOLONEPROPIONASE-RELATED"/>
    <property type="match status" value="1"/>
</dbReference>
<dbReference type="Pfam" id="PF07969">
    <property type="entry name" value="Amidohydro_3"/>
    <property type="match status" value="1"/>
</dbReference>
<dbReference type="Pfam" id="PF22039">
    <property type="entry name" value="HUTI_composite_bact"/>
    <property type="match status" value="1"/>
</dbReference>
<dbReference type="SUPFAM" id="SSF51338">
    <property type="entry name" value="Composite domain of metallo-dependent hydrolases"/>
    <property type="match status" value="1"/>
</dbReference>
<dbReference type="SUPFAM" id="SSF51556">
    <property type="entry name" value="Metallo-dependent hydrolases"/>
    <property type="match status" value="1"/>
</dbReference>
<proteinExistence type="inferred from homology"/>
<accession>A4WKX3</accession>
<reference key="1">
    <citation type="submission" date="2007-04" db="EMBL/GenBank/DDBJ databases">
        <title>Complete sequence of Pyrobaculum arsenaticum DSM 13514.</title>
        <authorList>
            <consortium name="US DOE Joint Genome Institute"/>
            <person name="Copeland A."/>
            <person name="Lucas S."/>
            <person name="Lapidus A."/>
            <person name="Barry K."/>
            <person name="Glavina del Rio T."/>
            <person name="Dalin E."/>
            <person name="Tice H."/>
            <person name="Pitluck S."/>
            <person name="Chain P."/>
            <person name="Malfatti S."/>
            <person name="Shin M."/>
            <person name="Vergez L."/>
            <person name="Schmutz J."/>
            <person name="Larimer F."/>
            <person name="Land M."/>
            <person name="Hauser L."/>
            <person name="Kyrpides N."/>
            <person name="Mikhailova N."/>
            <person name="Cozen A.E."/>
            <person name="Fitz-Gibbon S.T."/>
            <person name="House C.H."/>
            <person name="Saltikov C."/>
            <person name="Lowe T.M."/>
            <person name="Richardson P."/>
        </authorList>
    </citation>
    <scope>NUCLEOTIDE SEQUENCE [LARGE SCALE GENOMIC DNA]</scope>
    <source>
        <strain>ATCC 700994 / DSM 13514 / JCM 11321 / PZ6</strain>
    </source>
</reference>
<feature type="chain" id="PRO_0000306547" description="Imidazolonepropionase">
    <location>
        <begin position="1"/>
        <end position="395"/>
    </location>
</feature>
<feature type="binding site" evidence="1">
    <location>
        <position position="72"/>
    </location>
    <ligand>
        <name>Fe(3+)</name>
        <dbReference type="ChEBI" id="CHEBI:29034"/>
    </ligand>
</feature>
<feature type="binding site" evidence="1">
    <location>
        <position position="72"/>
    </location>
    <ligand>
        <name>Zn(2+)</name>
        <dbReference type="ChEBI" id="CHEBI:29105"/>
    </ligand>
</feature>
<feature type="binding site" evidence="1">
    <location>
        <position position="74"/>
    </location>
    <ligand>
        <name>Fe(3+)</name>
        <dbReference type="ChEBI" id="CHEBI:29034"/>
    </ligand>
</feature>
<feature type="binding site" evidence="1">
    <location>
        <position position="74"/>
    </location>
    <ligand>
        <name>Zn(2+)</name>
        <dbReference type="ChEBI" id="CHEBI:29105"/>
    </ligand>
</feature>
<feature type="binding site" evidence="1">
    <location>
        <position position="81"/>
    </location>
    <ligand>
        <name>4-imidazolone-5-propanoate</name>
        <dbReference type="ChEBI" id="CHEBI:77893"/>
    </ligand>
</feature>
<feature type="binding site" evidence="1">
    <location>
        <position position="144"/>
    </location>
    <ligand>
        <name>4-imidazolone-5-propanoate</name>
        <dbReference type="ChEBI" id="CHEBI:77893"/>
    </ligand>
</feature>
<feature type="binding site" evidence="1">
    <location>
        <position position="144"/>
    </location>
    <ligand>
        <name>N-formimidoyl-L-glutamate</name>
        <dbReference type="ChEBI" id="CHEBI:58928"/>
    </ligand>
</feature>
<feature type="binding site" evidence="1">
    <location>
        <position position="174"/>
    </location>
    <ligand>
        <name>4-imidazolone-5-propanoate</name>
        <dbReference type="ChEBI" id="CHEBI:77893"/>
    </ligand>
</feature>
<feature type="binding site" evidence="1">
    <location>
        <position position="231"/>
    </location>
    <ligand>
        <name>Fe(3+)</name>
        <dbReference type="ChEBI" id="CHEBI:29034"/>
    </ligand>
</feature>
<feature type="binding site" evidence="1">
    <location>
        <position position="231"/>
    </location>
    <ligand>
        <name>Zn(2+)</name>
        <dbReference type="ChEBI" id="CHEBI:29105"/>
    </ligand>
</feature>
<feature type="binding site" evidence="1">
    <location>
        <position position="234"/>
    </location>
    <ligand>
        <name>4-imidazolone-5-propanoate</name>
        <dbReference type="ChEBI" id="CHEBI:77893"/>
    </ligand>
</feature>
<feature type="binding site" evidence="1">
    <location>
        <position position="306"/>
    </location>
    <ligand>
        <name>Fe(3+)</name>
        <dbReference type="ChEBI" id="CHEBI:29034"/>
    </ligand>
</feature>
<feature type="binding site" evidence="1">
    <location>
        <position position="306"/>
    </location>
    <ligand>
        <name>Zn(2+)</name>
        <dbReference type="ChEBI" id="CHEBI:29105"/>
    </ligand>
</feature>
<gene>
    <name evidence="1" type="primary">hutI</name>
    <name type="ordered locus">Pars_1483</name>
</gene>
<organism>
    <name type="scientific">Pyrobaculum arsenaticum (strain DSM 13514 / JCM 11321 / PZ6)</name>
    <dbReference type="NCBI Taxonomy" id="340102"/>
    <lineage>
        <taxon>Archaea</taxon>
        <taxon>Thermoproteota</taxon>
        <taxon>Thermoprotei</taxon>
        <taxon>Thermoproteales</taxon>
        <taxon>Thermoproteaceae</taxon>
        <taxon>Pyrobaculum</taxon>
    </lineage>
</organism>
<name>HUTI_PYRAR</name>